<name>CH10_STRU0</name>
<comment type="function">
    <text evidence="1">Together with the chaperonin GroEL, plays an essential role in assisting protein folding. The GroEL-GroES system forms a nano-cage that allows encapsulation of the non-native substrate proteins and provides a physical environment optimized to promote and accelerate protein folding. GroES binds to the apical surface of the GroEL ring, thereby capping the opening of the GroEL channel.</text>
</comment>
<comment type="subunit">
    <text evidence="1">Heptamer of 7 subunits arranged in a ring. Interacts with the chaperonin GroEL.</text>
</comment>
<comment type="subcellular location">
    <subcellularLocation>
        <location evidence="1">Cytoplasm</location>
    </subcellularLocation>
</comment>
<comment type="similarity">
    <text evidence="1">Belongs to the GroES chaperonin family.</text>
</comment>
<keyword id="KW-0143">Chaperone</keyword>
<keyword id="KW-0963">Cytoplasm</keyword>
<keyword id="KW-1185">Reference proteome</keyword>
<sequence>MLKPLGDRVVVRFEEEKEQTVGGFVLAGNHKESTRKATVVAVSETGMRTITGEVVPPSVTVGQMVLVEDGQVLEVTHEDEKLAIIREADIIAILG</sequence>
<proteinExistence type="inferred from homology"/>
<gene>
    <name evidence="1" type="primary">groES</name>
    <name evidence="1" type="synonym">groS</name>
    <name type="ordered locus">SUB1742</name>
</gene>
<organism>
    <name type="scientific">Streptococcus uberis (strain ATCC BAA-854 / 0140J)</name>
    <dbReference type="NCBI Taxonomy" id="218495"/>
    <lineage>
        <taxon>Bacteria</taxon>
        <taxon>Bacillati</taxon>
        <taxon>Bacillota</taxon>
        <taxon>Bacilli</taxon>
        <taxon>Lactobacillales</taxon>
        <taxon>Streptococcaceae</taxon>
        <taxon>Streptococcus</taxon>
    </lineage>
</organism>
<evidence type="ECO:0000255" key="1">
    <source>
        <dbReference type="HAMAP-Rule" id="MF_00580"/>
    </source>
</evidence>
<reference key="1">
    <citation type="journal article" date="2009" name="BMC Genomics">
        <title>Evidence for niche adaptation in the genome of the bovine pathogen Streptococcus uberis.</title>
        <authorList>
            <person name="Ward P.N."/>
            <person name="Holden M.T.G."/>
            <person name="Leigh J.A."/>
            <person name="Lennard N."/>
            <person name="Bignell A."/>
            <person name="Barron A."/>
            <person name="Clark L."/>
            <person name="Quail M.A."/>
            <person name="Woodward J."/>
            <person name="Barrell B.G."/>
            <person name="Egan S.A."/>
            <person name="Field T.R."/>
            <person name="Maskell D."/>
            <person name="Kehoe M."/>
            <person name="Dowson C.G."/>
            <person name="Chanter N."/>
            <person name="Whatmore A.M."/>
            <person name="Bentley S.D."/>
            <person name="Parkhill J."/>
        </authorList>
    </citation>
    <scope>NUCLEOTIDE SEQUENCE [LARGE SCALE GENOMIC DNA]</scope>
    <source>
        <strain>ATCC BAA-854 / 0140J</strain>
    </source>
</reference>
<dbReference type="EMBL" id="AM946015">
    <property type="protein sequence ID" value="CAR43698.1"/>
    <property type="molecule type" value="Genomic_DNA"/>
</dbReference>
<dbReference type="RefSeq" id="WP_015912033.1">
    <property type="nucleotide sequence ID" value="NC_012004.1"/>
</dbReference>
<dbReference type="SMR" id="B9DW29"/>
<dbReference type="STRING" id="218495.SUB1742"/>
<dbReference type="GeneID" id="93827064"/>
<dbReference type="KEGG" id="sub:SUB1742"/>
<dbReference type="eggNOG" id="COG0234">
    <property type="taxonomic scope" value="Bacteria"/>
</dbReference>
<dbReference type="HOGENOM" id="CLU_132825_1_2_9"/>
<dbReference type="OrthoDB" id="9806791at2"/>
<dbReference type="Proteomes" id="UP000000449">
    <property type="component" value="Chromosome"/>
</dbReference>
<dbReference type="GO" id="GO:0005737">
    <property type="term" value="C:cytoplasm"/>
    <property type="evidence" value="ECO:0007669"/>
    <property type="project" value="UniProtKB-SubCell"/>
</dbReference>
<dbReference type="GO" id="GO:0005524">
    <property type="term" value="F:ATP binding"/>
    <property type="evidence" value="ECO:0007669"/>
    <property type="project" value="InterPro"/>
</dbReference>
<dbReference type="GO" id="GO:0046872">
    <property type="term" value="F:metal ion binding"/>
    <property type="evidence" value="ECO:0007669"/>
    <property type="project" value="TreeGrafter"/>
</dbReference>
<dbReference type="GO" id="GO:0044183">
    <property type="term" value="F:protein folding chaperone"/>
    <property type="evidence" value="ECO:0007669"/>
    <property type="project" value="InterPro"/>
</dbReference>
<dbReference type="GO" id="GO:0051087">
    <property type="term" value="F:protein-folding chaperone binding"/>
    <property type="evidence" value="ECO:0007669"/>
    <property type="project" value="TreeGrafter"/>
</dbReference>
<dbReference type="GO" id="GO:0051082">
    <property type="term" value="F:unfolded protein binding"/>
    <property type="evidence" value="ECO:0007669"/>
    <property type="project" value="TreeGrafter"/>
</dbReference>
<dbReference type="GO" id="GO:0051085">
    <property type="term" value="P:chaperone cofactor-dependent protein refolding"/>
    <property type="evidence" value="ECO:0007669"/>
    <property type="project" value="TreeGrafter"/>
</dbReference>
<dbReference type="CDD" id="cd00320">
    <property type="entry name" value="cpn10"/>
    <property type="match status" value="1"/>
</dbReference>
<dbReference type="FunFam" id="2.30.33.40:FF:000001">
    <property type="entry name" value="10 kDa chaperonin"/>
    <property type="match status" value="1"/>
</dbReference>
<dbReference type="Gene3D" id="2.30.33.40">
    <property type="entry name" value="GroES chaperonin"/>
    <property type="match status" value="1"/>
</dbReference>
<dbReference type="HAMAP" id="MF_00580">
    <property type="entry name" value="CH10"/>
    <property type="match status" value="1"/>
</dbReference>
<dbReference type="InterPro" id="IPR020818">
    <property type="entry name" value="Chaperonin_GroES"/>
</dbReference>
<dbReference type="InterPro" id="IPR037124">
    <property type="entry name" value="Chaperonin_GroES_sf"/>
</dbReference>
<dbReference type="InterPro" id="IPR018369">
    <property type="entry name" value="Chaprnonin_Cpn10_CS"/>
</dbReference>
<dbReference type="InterPro" id="IPR011032">
    <property type="entry name" value="GroES-like_sf"/>
</dbReference>
<dbReference type="NCBIfam" id="NF001528">
    <property type="entry name" value="PRK00364.1-4"/>
    <property type="match status" value="1"/>
</dbReference>
<dbReference type="PANTHER" id="PTHR10772">
    <property type="entry name" value="10 KDA HEAT SHOCK PROTEIN"/>
    <property type="match status" value="1"/>
</dbReference>
<dbReference type="PANTHER" id="PTHR10772:SF58">
    <property type="entry name" value="CO-CHAPERONIN GROES"/>
    <property type="match status" value="1"/>
</dbReference>
<dbReference type="Pfam" id="PF00166">
    <property type="entry name" value="Cpn10"/>
    <property type="match status" value="1"/>
</dbReference>
<dbReference type="PRINTS" id="PR00297">
    <property type="entry name" value="CHAPERONIN10"/>
</dbReference>
<dbReference type="SMART" id="SM00883">
    <property type="entry name" value="Cpn10"/>
    <property type="match status" value="1"/>
</dbReference>
<dbReference type="SUPFAM" id="SSF50129">
    <property type="entry name" value="GroES-like"/>
    <property type="match status" value="1"/>
</dbReference>
<dbReference type="PROSITE" id="PS00681">
    <property type="entry name" value="CHAPERONINS_CPN10"/>
    <property type="match status" value="1"/>
</dbReference>
<protein>
    <recommendedName>
        <fullName evidence="1">Co-chaperonin GroES</fullName>
    </recommendedName>
    <alternativeName>
        <fullName evidence="1">10 kDa chaperonin</fullName>
    </alternativeName>
    <alternativeName>
        <fullName evidence="1">Chaperonin-10</fullName>
        <shortName evidence="1">Cpn10</shortName>
    </alternativeName>
</protein>
<accession>B9DW29</accession>
<feature type="chain" id="PRO_1000146920" description="Co-chaperonin GroES">
    <location>
        <begin position="1"/>
        <end position="95"/>
    </location>
</feature>